<evidence type="ECO:0000250" key="1"/>
<evidence type="ECO:0000255" key="2"/>
<evidence type="ECO:0000305" key="3"/>
<gene>
    <name type="primary">MT-ND6</name>
    <name type="synonym">MTND6</name>
    <name type="synonym">NADH6</name>
    <name type="synonym">ND6</name>
</gene>
<comment type="function">
    <text evidence="1">Core subunit of the mitochondrial membrane respiratory chain NADH dehydrogenase (Complex I) that is believed to belong to the minimal assembly required for catalysis. Complex I functions in the transfer of electrons from NADH to the respiratory chain. The immediate electron acceptor for the enzyme is believed to be ubiquinone (By similarity).</text>
</comment>
<comment type="catalytic activity">
    <reaction>
        <text>a ubiquinone + NADH + 5 H(+)(in) = a ubiquinol + NAD(+) + 4 H(+)(out)</text>
        <dbReference type="Rhea" id="RHEA:29091"/>
        <dbReference type="Rhea" id="RHEA-COMP:9565"/>
        <dbReference type="Rhea" id="RHEA-COMP:9566"/>
        <dbReference type="ChEBI" id="CHEBI:15378"/>
        <dbReference type="ChEBI" id="CHEBI:16389"/>
        <dbReference type="ChEBI" id="CHEBI:17976"/>
        <dbReference type="ChEBI" id="CHEBI:57540"/>
        <dbReference type="ChEBI" id="CHEBI:57945"/>
        <dbReference type="EC" id="7.1.1.2"/>
    </reaction>
</comment>
<comment type="subcellular location">
    <subcellularLocation>
        <location evidence="3">Mitochondrion membrane</location>
        <topology evidence="3">Multi-pass membrane protein</topology>
    </subcellularLocation>
</comment>
<comment type="similarity">
    <text evidence="3">Belongs to the complex I subunit 6 family.</text>
</comment>
<reference key="1">
    <citation type="journal article" date="1994" name="Curr. Genet.">
        <title>Intragenic rearrangements in the mitochondrial NADH dehydrogenase subunit 6 gene of vertebrates.</title>
        <authorList>
            <person name="Moum T."/>
            <person name="Willassen N.P."/>
            <person name="Johansen S."/>
        </authorList>
    </citation>
    <scope>NUCLEOTIDE SEQUENCE [GENOMIC DNA]</scope>
</reference>
<geneLocation type="mitochondrion"/>
<keyword id="KW-0249">Electron transport</keyword>
<keyword id="KW-0472">Membrane</keyword>
<keyword id="KW-0496">Mitochondrion</keyword>
<keyword id="KW-0520">NAD</keyword>
<keyword id="KW-0679">Respiratory chain</keyword>
<keyword id="KW-1278">Translocase</keyword>
<keyword id="KW-0812">Transmembrane</keyword>
<keyword id="KW-1133">Transmembrane helix</keyword>
<keyword id="KW-0813">Transport</keyword>
<keyword id="KW-0830">Ubiquinone</keyword>
<organism>
    <name type="scientific">Synthliboramphus antiquus</name>
    <name type="common">Ancient murrelet</name>
    <dbReference type="NCBI Taxonomy" id="28708"/>
    <lineage>
        <taxon>Eukaryota</taxon>
        <taxon>Metazoa</taxon>
        <taxon>Chordata</taxon>
        <taxon>Craniata</taxon>
        <taxon>Vertebrata</taxon>
        <taxon>Euteleostomi</taxon>
        <taxon>Archelosauria</taxon>
        <taxon>Archosauria</taxon>
        <taxon>Dinosauria</taxon>
        <taxon>Saurischia</taxon>
        <taxon>Theropoda</taxon>
        <taxon>Coelurosauria</taxon>
        <taxon>Aves</taxon>
        <taxon>Neognathae</taxon>
        <taxon>Neoaves</taxon>
        <taxon>Charadriiformes</taxon>
        <taxon>Alcidae</taxon>
        <taxon>Synthliboramphus</taxon>
    </lineage>
</organism>
<proteinExistence type="inferred from homology"/>
<protein>
    <recommendedName>
        <fullName>NADH-ubiquinone oxidoreductase chain 6</fullName>
        <ecNumber>7.1.1.2</ecNumber>
    </recommendedName>
    <alternativeName>
        <fullName>NADH dehydrogenase subunit 6</fullName>
    </alternativeName>
</protein>
<dbReference type="EC" id="7.1.1.2"/>
<dbReference type="EMBL" id="X73920">
    <property type="protein sequence ID" value="CAA52125.1"/>
    <property type="molecule type" value="Genomic_DNA"/>
</dbReference>
<dbReference type="PIR" id="S44401">
    <property type="entry name" value="S44401"/>
</dbReference>
<dbReference type="GO" id="GO:0031966">
    <property type="term" value="C:mitochondrial membrane"/>
    <property type="evidence" value="ECO:0007669"/>
    <property type="project" value="UniProtKB-SubCell"/>
</dbReference>
<dbReference type="GO" id="GO:0008137">
    <property type="term" value="F:NADH dehydrogenase (ubiquinone) activity"/>
    <property type="evidence" value="ECO:0007669"/>
    <property type="project" value="UniProtKB-EC"/>
</dbReference>
<dbReference type="Gene3D" id="1.20.120.1200">
    <property type="entry name" value="NADH-ubiquinone/plastoquinone oxidoreductase chain 6, subunit NuoJ"/>
    <property type="match status" value="1"/>
</dbReference>
<dbReference type="InterPro" id="IPR050269">
    <property type="entry name" value="ComplexI_Subunit6"/>
</dbReference>
<dbReference type="InterPro" id="IPR001457">
    <property type="entry name" value="NADH_UbQ/plastoQ_OxRdtase_su6"/>
</dbReference>
<dbReference type="InterPro" id="IPR042106">
    <property type="entry name" value="Nuo/plastoQ_OxRdtase_6_NuoJ"/>
</dbReference>
<dbReference type="PANTHER" id="PTHR11435">
    <property type="entry name" value="NADH UBIQUINONE OXIDOREDUCTASE SUBUNIT ND6"/>
    <property type="match status" value="1"/>
</dbReference>
<dbReference type="PANTHER" id="PTHR11435:SF1">
    <property type="entry name" value="NADH-UBIQUINONE OXIDOREDUCTASE CHAIN 6"/>
    <property type="match status" value="1"/>
</dbReference>
<dbReference type="Pfam" id="PF00499">
    <property type="entry name" value="Oxidored_q3"/>
    <property type="match status" value="1"/>
</dbReference>
<name>NU6M_SYNAN</name>
<sequence>MTYFMLFLGLCFVLGGLAVASNPSPYYGVVGLVLASVVGCGWLMSLGMSFVSLVLFMVYLGGMLVVFVYSVSLAADPFPEAWGDWRVVGYGVSFIVVLAAGAVVGGLVGCWDSGVITVDSVGMLSVRLDFSGVAMFYSCGVGMFLVAGWGLLLTLFVVLELVRGLSCGAIRAV</sequence>
<accession>P43204</accession>
<feature type="chain" id="PRO_0000118338" description="NADH-ubiquinone oxidoreductase chain 6">
    <location>
        <begin position="1"/>
        <end position="173"/>
    </location>
</feature>
<feature type="transmembrane region" description="Helical" evidence="2">
    <location>
        <begin position="1"/>
        <end position="21"/>
    </location>
</feature>
<feature type="transmembrane region" description="Helical" evidence="2">
    <location>
        <begin position="27"/>
        <end position="47"/>
    </location>
</feature>
<feature type="transmembrane region" description="Helical" evidence="2">
    <location>
        <begin position="48"/>
        <end position="68"/>
    </location>
</feature>
<feature type="transmembrane region" description="Helical" evidence="2">
    <location>
        <begin position="87"/>
        <end position="107"/>
    </location>
</feature>
<feature type="transmembrane region" description="Helical" evidence="2">
    <location>
        <begin position="139"/>
        <end position="159"/>
    </location>
</feature>